<name>RS7_GEOKA</name>
<comment type="function">
    <text evidence="1">One of the primary rRNA binding proteins, it binds directly to 16S rRNA where it nucleates assembly of the head domain of the 30S subunit. Is located at the subunit interface close to the decoding center, probably blocks exit of the E-site tRNA.</text>
</comment>
<comment type="subunit">
    <text evidence="1">Part of the 30S ribosomal subunit. Contacts proteins S9 and S11.</text>
</comment>
<comment type="similarity">
    <text evidence="1">Belongs to the universal ribosomal protein uS7 family.</text>
</comment>
<sequence length="156" mass="18074">MPRRGPVAKRDVLPDPIYNSKLVTRLINKIMIDGKKSKAQKILYTAFDIIRERTGKDPMEVFEQALKNVMPVLEVRARRVGGANYQVPVEVRPDRRVSLGLRWLVQYARLRNEKTMEERLANEIMDAANNTGAAVKKREDTHKMAEANRAFAHYRW</sequence>
<accession>Q5L401</accession>
<reference key="1">
    <citation type="journal article" date="2004" name="Nucleic Acids Res.">
        <title>Thermoadaptation trait revealed by the genome sequence of thermophilic Geobacillus kaustophilus.</title>
        <authorList>
            <person name="Takami H."/>
            <person name="Takaki Y."/>
            <person name="Chee G.-J."/>
            <person name="Nishi S."/>
            <person name="Shimamura S."/>
            <person name="Suzuki H."/>
            <person name="Matsui S."/>
            <person name="Uchiyama I."/>
        </authorList>
    </citation>
    <scope>NUCLEOTIDE SEQUENCE [LARGE SCALE GENOMIC DNA]</scope>
    <source>
        <strain>HTA426</strain>
    </source>
</reference>
<keyword id="KW-1185">Reference proteome</keyword>
<keyword id="KW-0687">Ribonucleoprotein</keyword>
<keyword id="KW-0689">Ribosomal protein</keyword>
<keyword id="KW-0694">RNA-binding</keyword>
<keyword id="KW-0699">rRNA-binding</keyword>
<keyword id="KW-0820">tRNA-binding</keyword>
<dbReference type="EMBL" id="BA000043">
    <property type="protein sequence ID" value="BAD74387.1"/>
    <property type="molecule type" value="Genomic_DNA"/>
</dbReference>
<dbReference type="RefSeq" id="WP_011229617.1">
    <property type="nucleotide sequence ID" value="NC_006510.1"/>
</dbReference>
<dbReference type="SMR" id="Q5L401"/>
<dbReference type="STRING" id="235909.GK0102"/>
<dbReference type="GeneID" id="32062090"/>
<dbReference type="KEGG" id="gka:GK0102"/>
<dbReference type="eggNOG" id="COG0049">
    <property type="taxonomic scope" value="Bacteria"/>
</dbReference>
<dbReference type="HOGENOM" id="CLU_072226_1_1_9"/>
<dbReference type="Proteomes" id="UP000001172">
    <property type="component" value="Chromosome"/>
</dbReference>
<dbReference type="GO" id="GO:0015935">
    <property type="term" value="C:small ribosomal subunit"/>
    <property type="evidence" value="ECO:0007669"/>
    <property type="project" value="InterPro"/>
</dbReference>
<dbReference type="GO" id="GO:0019843">
    <property type="term" value="F:rRNA binding"/>
    <property type="evidence" value="ECO:0007669"/>
    <property type="project" value="UniProtKB-UniRule"/>
</dbReference>
<dbReference type="GO" id="GO:0003735">
    <property type="term" value="F:structural constituent of ribosome"/>
    <property type="evidence" value="ECO:0007669"/>
    <property type="project" value="InterPro"/>
</dbReference>
<dbReference type="GO" id="GO:0000049">
    <property type="term" value="F:tRNA binding"/>
    <property type="evidence" value="ECO:0007669"/>
    <property type="project" value="UniProtKB-UniRule"/>
</dbReference>
<dbReference type="GO" id="GO:0006412">
    <property type="term" value="P:translation"/>
    <property type="evidence" value="ECO:0007669"/>
    <property type="project" value="UniProtKB-UniRule"/>
</dbReference>
<dbReference type="CDD" id="cd14869">
    <property type="entry name" value="uS7_Bacteria"/>
    <property type="match status" value="1"/>
</dbReference>
<dbReference type="FunFam" id="1.10.455.10:FF:000001">
    <property type="entry name" value="30S ribosomal protein S7"/>
    <property type="match status" value="1"/>
</dbReference>
<dbReference type="Gene3D" id="1.10.455.10">
    <property type="entry name" value="Ribosomal protein S7 domain"/>
    <property type="match status" value="1"/>
</dbReference>
<dbReference type="HAMAP" id="MF_00480_B">
    <property type="entry name" value="Ribosomal_uS7_B"/>
    <property type="match status" value="1"/>
</dbReference>
<dbReference type="InterPro" id="IPR000235">
    <property type="entry name" value="Ribosomal_uS7"/>
</dbReference>
<dbReference type="InterPro" id="IPR005717">
    <property type="entry name" value="Ribosomal_uS7_bac/org-type"/>
</dbReference>
<dbReference type="InterPro" id="IPR020606">
    <property type="entry name" value="Ribosomal_uS7_CS"/>
</dbReference>
<dbReference type="InterPro" id="IPR023798">
    <property type="entry name" value="Ribosomal_uS7_dom"/>
</dbReference>
<dbReference type="InterPro" id="IPR036823">
    <property type="entry name" value="Ribosomal_uS7_dom_sf"/>
</dbReference>
<dbReference type="NCBIfam" id="TIGR01029">
    <property type="entry name" value="rpsG_bact"/>
    <property type="match status" value="1"/>
</dbReference>
<dbReference type="PANTHER" id="PTHR11205">
    <property type="entry name" value="RIBOSOMAL PROTEIN S7"/>
    <property type="match status" value="1"/>
</dbReference>
<dbReference type="Pfam" id="PF00177">
    <property type="entry name" value="Ribosomal_S7"/>
    <property type="match status" value="1"/>
</dbReference>
<dbReference type="PIRSF" id="PIRSF002122">
    <property type="entry name" value="RPS7p_RPS7a_RPS5e_RPS7o"/>
    <property type="match status" value="1"/>
</dbReference>
<dbReference type="SUPFAM" id="SSF47973">
    <property type="entry name" value="Ribosomal protein S7"/>
    <property type="match status" value="1"/>
</dbReference>
<dbReference type="PROSITE" id="PS00052">
    <property type="entry name" value="RIBOSOMAL_S7"/>
    <property type="match status" value="1"/>
</dbReference>
<protein>
    <recommendedName>
        <fullName evidence="1">Small ribosomal subunit protein uS7</fullName>
    </recommendedName>
    <alternativeName>
        <fullName evidence="2">30S ribosomal protein S7</fullName>
    </alternativeName>
</protein>
<proteinExistence type="inferred from homology"/>
<evidence type="ECO:0000255" key="1">
    <source>
        <dbReference type="HAMAP-Rule" id="MF_00480"/>
    </source>
</evidence>
<evidence type="ECO:0000305" key="2"/>
<gene>
    <name evidence="1" type="primary">rpsG</name>
    <name type="ordered locus">GK0102</name>
</gene>
<feature type="chain" id="PRO_0000124267" description="Small ribosomal subunit protein uS7">
    <location>
        <begin position="1"/>
        <end position="156"/>
    </location>
</feature>
<organism>
    <name type="scientific">Geobacillus kaustophilus (strain HTA426)</name>
    <dbReference type="NCBI Taxonomy" id="235909"/>
    <lineage>
        <taxon>Bacteria</taxon>
        <taxon>Bacillati</taxon>
        <taxon>Bacillota</taxon>
        <taxon>Bacilli</taxon>
        <taxon>Bacillales</taxon>
        <taxon>Anoxybacillaceae</taxon>
        <taxon>Geobacillus</taxon>
        <taxon>Geobacillus thermoleovorans group</taxon>
    </lineage>
</organism>